<comment type="function">
    <text evidence="4 6 9">May be involved in digestion of prey (PubMed:29649486). Pore-forming protein that forms cations-selective hydrophilic pores of around 1 nm and causes cytolysis. Pore formation is a multi-step process that involves specific recognition of membrane sphingomyelin (but neither cholesterol nor phosphatidylcholine) using aromatic rich region and adjacent phosphocholine (POC) binding site, firm binding to the membrane (mainly driven by hydrophobic interactions) accompanied by the transfer of the N-terminal region to the lipid-water interface and finally pore formation after oligomerization of monomers (By similarity). Shows hemolytic activity on equine erythrocytes (PubMed:29649486). Hemolysis is highly inhibited in presence of sphingomyelin, suggesting that this protein targets sphingomyelin (PubMed:29649486).</text>
</comment>
<comment type="subunit">
    <text evidence="1">Octamer or nonamer in membranes. Monomer in the soluble state.</text>
</comment>
<comment type="subcellular location">
    <subcellularLocation>
        <location evidence="9">Secreted</location>
    </subcellularLocation>
    <subcellularLocation>
        <location evidence="2">Nematocyst</location>
    </subcellularLocation>
    <subcellularLocation>
        <location evidence="9">Target cell membrane</location>
    </subcellularLocation>
    <text evidence="1">Forms an alpha-helical membrane channel in the prey.</text>
</comment>
<comment type="tissue specificity">
    <text evidence="6">Expressed in actinopharynx and in gastric filaments. Is not expressed in tentacles.</text>
</comment>
<comment type="domain">
    <text evidence="3">Composed of a long N-terminal alpha-helix and a core region rich in beta-sheet structures. Before the pore formation, the alpha-helix binds the lipid membrane, partitions into the lipid-water interface and stabilizes the monomeric molecule on the membrane. Finally, it traverses the bilayer, thus forming the transmembrane pore.</text>
</comment>
<comment type="similarity">
    <text evidence="8">Belongs to the actinoporin family. Sea anemone subfamily.</text>
</comment>
<name>ACT2_CRIJA</name>
<feature type="signal peptide" evidence="5">
    <location>
        <begin position="1"/>
        <end position="19"/>
    </location>
</feature>
<feature type="propeptide" id="PRO_0000457359" evidence="8">
    <location>
        <begin position="20"/>
        <end position="42"/>
    </location>
</feature>
<feature type="chain" id="PRO_5016463318" description="Deep sea actinoporin Cjtox II">
    <location>
        <begin position="43"/>
        <end position="221"/>
    </location>
</feature>
<feature type="region of interest" description="Trp-rich region, which is important for the binding to lipid membrane" evidence="3">
    <location>
        <begin position="147"/>
        <end position="162"/>
    </location>
</feature>
<feature type="short sequence motif" description="Cell attachment site, crucial for protein stability" evidence="2 5">
    <location>
        <begin position="186"/>
        <end position="188"/>
    </location>
</feature>
<feature type="binding site" evidence="2">
    <location>
        <position position="96"/>
    </location>
    <ligand>
        <name>phosphocholine</name>
        <dbReference type="ChEBI" id="CHEBI:295975"/>
    </ligand>
</feature>
<feature type="binding site" evidence="2">
    <location>
        <position position="129"/>
    </location>
    <ligand>
        <name>phosphocholine</name>
        <dbReference type="ChEBI" id="CHEBI:295975"/>
    </ligand>
</feature>
<feature type="binding site" evidence="2">
    <location>
        <position position="147"/>
    </location>
    <ligand>
        <name>phosphocholine</name>
        <dbReference type="ChEBI" id="CHEBI:295975"/>
    </ligand>
</feature>
<feature type="binding site" evidence="2">
    <location>
        <position position="149"/>
    </location>
    <ligand>
        <name>phosphocholine</name>
        <dbReference type="ChEBI" id="CHEBI:295975"/>
    </ligand>
</feature>
<feature type="binding site" evidence="2">
    <location>
        <position position="175"/>
    </location>
    <ligand>
        <name>phosphocholine</name>
        <dbReference type="ChEBI" id="CHEBI:295975"/>
    </ligand>
</feature>
<feature type="binding site" evidence="2">
    <location>
        <position position="179"/>
    </location>
    <ligand>
        <name>phosphocholine</name>
        <dbReference type="ChEBI" id="CHEBI:295975"/>
    </ligand>
</feature>
<feature type="binding site" evidence="2">
    <location>
        <position position="180"/>
    </location>
    <ligand>
        <name>phosphocholine</name>
        <dbReference type="ChEBI" id="CHEBI:295975"/>
    </ligand>
</feature>
<feature type="site" description="Important in the initial contact with the lipid membrane" evidence="3">
    <location>
        <position position="155"/>
    </location>
</feature>
<feature type="site" description="Interacts with the lipid membrane" evidence="3">
    <location>
        <position position="202"/>
    </location>
</feature>
<dbReference type="EMBL" id="LC350099">
    <property type="protein sequence ID" value="BBC77265.1"/>
    <property type="molecule type" value="mRNA"/>
</dbReference>
<dbReference type="SMR" id="A0A2Z5Z9H5"/>
<dbReference type="GO" id="GO:0005576">
    <property type="term" value="C:extracellular region"/>
    <property type="evidence" value="ECO:0007669"/>
    <property type="project" value="UniProtKB-SubCell"/>
</dbReference>
<dbReference type="GO" id="GO:0042151">
    <property type="term" value="C:nematocyst"/>
    <property type="evidence" value="ECO:0007669"/>
    <property type="project" value="UniProtKB-SubCell"/>
</dbReference>
<dbReference type="GO" id="GO:0044218">
    <property type="term" value="C:other organism cell membrane"/>
    <property type="evidence" value="ECO:0007669"/>
    <property type="project" value="UniProtKB-KW"/>
</dbReference>
<dbReference type="GO" id="GO:0046930">
    <property type="term" value="C:pore complex"/>
    <property type="evidence" value="ECO:0007669"/>
    <property type="project" value="InterPro"/>
</dbReference>
<dbReference type="GO" id="GO:0015267">
    <property type="term" value="F:channel activity"/>
    <property type="evidence" value="ECO:0007669"/>
    <property type="project" value="InterPro"/>
</dbReference>
<dbReference type="GO" id="GO:0090729">
    <property type="term" value="F:toxin activity"/>
    <property type="evidence" value="ECO:0007669"/>
    <property type="project" value="UniProtKB-KW"/>
</dbReference>
<dbReference type="GO" id="GO:0051715">
    <property type="term" value="P:cytolysis in another organism"/>
    <property type="evidence" value="ECO:0007669"/>
    <property type="project" value="InterPro"/>
</dbReference>
<dbReference type="GO" id="GO:0006812">
    <property type="term" value="P:monoatomic cation transport"/>
    <property type="evidence" value="ECO:0007669"/>
    <property type="project" value="InterPro"/>
</dbReference>
<dbReference type="GO" id="GO:0046931">
    <property type="term" value="P:pore complex assembly"/>
    <property type="evidence" value="ECO:0007669"/>
    <property type="project" value="InterPro"/>
</dbReference>
<dbReference type="FunFam" id="2.60.270.20:FF:000001">
    <property type="entry name" value="DELTA-actitoxin-Afr1a"/>
    <property type="match status" value="1"/>
</dbReference>
<dbReference type="Gene3D" id="2.60.270.20">
    <property type="entry name" value="Cytolysin/lectin"/>
    <property type="match status" value="1"/>
</dbReference>
<dbReference type="InterPro" id="IPR050677">
    <property type="entry name" value="Actinoporin_PFT"/>
</dbReference>
<dbReference type="InterPro" id="IPR009104">
    <property type="entry name" value="Anemon_actinoporin-like"/>
</dbReference>
<dbReference type="InterPro" id="IPR015926">
    <property type="entry name" value="Cytolysin/lectin"/>
</dbReference>
<dbReference type="PANTHER" id="PTHR40388">
    <property type="entry name" value="BRYOPORIN"/>
    <property type="match status" value="1"/>
</dbReference>
<dbReference type="PANTHER" id="PTHR40388:SF1">
    <property type="entry name" value="BRYOPORIN"/>
    <property type="match status" value="1"/>
</dbReference>
<dbReference type="Pfam" id="PF06369">
    <property type="entry name" value="Anemone_cytotox"/>
    <property type="match status" value="1"/>
</dbReference>
<dbReference type="SUPFAM" id="SSF63724">
    <property type="entry name" value="Cytolysin/lectin"/>
    <property type="match status" value="1"/>
</dbReference>
<proteinExistence type="evidence at transcript level"/>
<organism>
    <name type="scientific">Cribrinopsis japonica</name>
    <name type="common">Deep-sea anemone</name>
    <dbReference type="NCBI Taxonomy" id="1799150"/>
    <lineage>
        <taxon>Eukaryota</taxon>
        <taxon>Metazoa</taxon>
        <taxon>Cnidaria</taxon>
        <taxon>Anthozoa</taxon>
        <taxon>Hexacorallia</taxon>
        <taxon>Actiniaria</taxon>
        <taxon>Actiniidae</taxon>
        <taxon>Cribrinopsis</taxon>
    </lineage>
</organism>
<protein>
    <recommendedName>
        <fullName evidence="7">Deep sea actinoporin Cjtox II</fullName>
    </recommendedName>
    <alternativeName>
        <fullName evidence="8">DELTA-actitoxin-Cja1b</fullName>
        <shortName evidence="8">DELTA-AITX-Cja1b</shortName>
    </alternativeName>
</protein>
<accession>A0A2Z5Z9H5</accession>
<reference evidence="10" key="1">
    <citation type="journal article" date="2018" name="Toxicon">
        <title>Identification of the two new, functional actinoporins, CJTOX I and CJTOX II, from the deep-sea anemone Cribrinopsis japonica.</title>
        <authorList>
            <person name="Tsutsui K."/>
            <person name="Sato T."/>
        </authorList>
    </citation>
    <scope>NUCLEOTIDE SEQUENCE [MRNA]</scope>
    <scope>FUNCTION</scope>
    <scope>RECOMBINANT EXPRESSION</scope>
</reference>
<keyword id="KW-0165">Cleavage on pair of basic residues</keyword>
<keyword id="KW-0204">Cytolysis</keyword>
<keyword id="KW-0472">Membrane</keyword>
<keyword id="KW-0166">Nematocyst</keyword>
<keyword id="KW-0964">Secreted</keyword>
<keyword id="KW-0732">Signal</keyword>
<keyword id="KW-1052">Target cell membrane</keyword>
<keyword id="KW-1053">Target membrane</keyword>
<keyword id="KW-0800">Toxin</keyword>
<evidence type="ECO:0000250" key="1">
    <source>
        <dbReference type="UniProtKB" id="B9W5G6"/>
    </source>
</evidence>
<evidence type="ECO:0000250" key="2">
    <source>
        <dbReference type="UniProtKB" id="P07845"/>
    </source>
</evidence>
<evidence type="ECO:0000250" key="3">
    <source>
        <dbReference type="UniProtKB" id="P61914"/>
    </source>
</evidence>
<evidence type="ECO:0000250" key="4">
    <source>
        <dbReference type="UniProtKB" id="Q86FQ0"/>
    </source>
</evidence>
<evidence type="ECO:0000255" key="5"/>
<evidence type="ECO:0000269" key="6">
    <source>
    </source>
</evidence>
<evidence type="ECO:0000303" key="7">
    <source>
    </source>
</evidence>
<evidence type="ECO:0000305" key="8"/>
<evidence type="ECO:0000305" key="9">
    <source>
    </source>
</evidence>
<evidence type="ECO:0000312" key="10">
    <source>
        <dbReference type="EMBL" id="BBC77265.1"/>
    </source>
</evidence>
<sequence>MNRLIIVCLVAAMIYSTIALPMKEDISNDERPISVNEEPVKKNAAVAGAVIQGATLTFQVLDRILTVLGDISRKIAIGVDNESGRKWTAKNAYFFSGTSDVVLPYSVPNGKAFLYDGKKTRGPVATGAVGVLAYSMSDGNTLGILFSVPYDYNWYENWWNIKVYSGSKRANKWMYENLYYNASPHKGDNGWHEKSLGYGLKSRGYMASSGQTKLEIRVTRA</sequence>